<organism>
    <name type="scientific">Schizosaccharomyces pombe (strain 972 / ATCC 24843)</name>
    <name type="common">Fission yeast</name>
    <dbReference type="NCBI Taxonomy" id="284812"/>
    <lineage>
        <taxon>Eukaryota</taxon>
        <taxon>Fungi</taxon>
        <taxon>Dikarya</taxon>
        <taxon>Ascomycota</taxon>
        <taxon>Taphrinomycotina</taxon>
        <taxon>Schizosaccharomycetes</taxon>
        <taxon>Schizosaccharomycetales</taxon>
        <taxon>Schizosaccharomycetaceae</taxon>
        <taxon>Schizosaccharomyces</taxon>
    </lineage>
</organism>
<accession>Q9URX7</accession>
<gene>
    <name evidence="7" type="primary">rmt1</name>
    <name evidence="8" type="ORF">SPAC890.07c</name>
</gene>
<keyword id="KW-0489">Methyltransferase</keyword>
<keyword id="KW-0539">Nucleus</keyword>
<keyword id="KW-0597">Phosphoprotein</keyword>
<keyword id="KW-1185">Reference proteome</keyword>
<keyword id="KW-0949">S-adenosyl-L-methionine</keyword>
<keyword id="KW-0808">Transferase</keyword>
<comment type="function">
    <text evidence="1 5">S-adenosyl-L-methionine-dependent protein-arginine N-methyltransferase that catalyzes both the mono- and asymmetric (type I) dimethylation of the guanidino nitrogens of arginine residues in target proteins (By similarity). Asymmetrically dimethylates the polyadenylate-binding protein pab2, modulating pab2 oligomerization (PubMed:17213188).</text>
</comment>
<comment type="catalytic activity">
    <reaction evidence="1">
        <text>L-arginyl-[protein] + S-adenosyl-L-methionine = N(omega)-methyl-L-arginyl-[protein] + S-adenosyl-L-homocysteine + H(+)</text>
        <dbReference type="Rhea" id="RHEA:48100"/>
        <dbReference type="Rhea" id="RHEA-COMP:10532"/>
        <dbReference type="Rhea" id="RHEA-COMP:11990"/>
        <dbReference type="ChEBI" id="CHEBI:15378"/>
        <dbReference type="ChEBI" id="CHEBI:29965"/>
        <dbReference type="ChEBI" id="CHEBI:57856"/>
        <dbReference type="ChEBI" id="CHEBI:59789"/>
        <dbReference type="ChEBI" id="CHEBI:65280"/>
    </reaction>
    <physiologicalReaction direction="left-to-right" evidence="1">
        <dbReference type="Rhea" id="RHEA:48101"/>
    </physiologicalReaction>
</comment>
<comment type="catalytic activity">
    <reaction evidence="1">
        <text>L-arginyl-[protein] + 2 S-adenosyl-L-methionine = N(omega),N(omega)-dimethyl-L-arginyl-[protein] + 2 S-adenosyl-L-homocysteine + 2 H(+)</text>
        <dbReference type="Rhea" id="RHEA:48096"/>
        <dbReference type="Rhea" id="RHEA-COMP:10532"/>
        <dbReference type="Rhea" id="RHEA-COMP:11991"/>
        <dbReference type="ChEBI" id="CHEBI:15378"/>
        <dbReference type="ChEBI" id="CHEBI:29965"/>
        <dbReference type="ChEBI" id="CHEBI:57856"/>
        <dbReference type="ChEBI" id="CHEBI:59789"/>
        <dbReference type="ChEBI" id="CHEBI:61897"/>
        <dbReference type="EC" id="2.1.1.319"/>
    </reaction>
    <physiologicalReaction direction="left-to-right" evidence="1">
        <dbReference type="Rhea" id="RHEA:48097"/>
    </physiologicalReaction>
</comment>
<comment type="subunit">
    <text evidence="5">Interacts with pab2.</text>
</comment>
<comment type="subcellular location">
    <subcellularLocation>
        <location evidence="4">Nucleus</location>
    </subcellularLocation>
</comment>
<comment type="similarity">
    <text evidence="3">Belongs to the class I-like SAM-binding methyltransferase superfamily. Protein arginine N-methyltransferase family.</text>
</comment>
<feature type="chain" id="PRO_0000212337" description="Protein arginine N-methyltransferase 1">
    <location>
        <begin position="1"/>
        <end position="340"/>
    </location>
</feature>
<feature type="domain" description="SAM-dependent MTase PRMT-type" evidence="3">
    <location>
        <begin position="16"/>
        <end position="311"/>
    </location>
</feature>
<feature type="active site" evidence="2">
    <location>
        <position position="128"/>
    </location>
</feature>
<feature type="active site" evidence="2">
    <location>
        <position position="137"/>
    </location>
</feature>
<feature type="binding site" evidence="2">
    <location>
        <position position="29"/>
    </location>
    <ligand>
        <name>S-adenosyl-L-methionine</name>
        <dbReference type="ChEBI" id="CHEBI:59789"/>
    </ligand>
</feature>
<feature type="binding site" evidence="2">
    <location>
        <position position="38"/>
    </location>
    <ligand>
        <name>S-adenosyl-L-methionine</name>
        <dbReference type="ChEBI" id="CHEBI:59789"/>
    </ligand>
</feature>
<feature type="binding site" evidence="2">
    <location>
        <position position="62"/>
    </location>
    <ligand>
        <name>S-adenosyl-L-methionine</name>
        <dbReference type="ChEBI" id="CHEBI:59789"/>
    </ligand>
</feature>
<feature type="binding site" evidence="2">
    <location>
        <position position="84"/>
    </location>
    <ligand>
        <name>S-adenosyl-L-methionine</name>
        <dbReference type="ChEBI" id="CHEBI:59789"/>
    </ligand>
</feature>
<feature type="binding site" evidence="2">
    <location>
        <position position="113"/>
    </location>
    <ligand>
        <name>S-adenosyl-L-methionine</name>
        <dbReference type="ChEBI" id="CHEBI:59789"/>
    </ligand>
</feature>
<feature type="modified residue" description="Phosphotyrosine" evidence="6">
    <location>
        <position position="19"/>
    </location>
</feature>
<feature type="modified residue" description="Phosphoserine" evidence="6">
    <location>
        <position position="176"/>
    </location>
</feature>
<evidence type="ECO:0000250" key="1">
    <source>
        <dbReference type="UniProtKB" id="P38074"/>
    </source>
</evidence>
<evidence type="ECO:0000250" key="2">
    <source>
        <dbReference type="UniProtKB" id="Q63009"/>
    </source>
</evidence>
<evidence type="ECO:0000255" key="3">
    <source>
        <dbReference type="PROSITE-ProRule" id="PRU01015"/>
    </source>
</evidence>
<evidence type="ECO:0000269" key="4">
    <source>
    </source>
</evidence>
<evidence type="ECO:0000269" key="5">
    <source>
    </source>
</evidence>
<evidence type="ECO:0000269" key="6">
    <source>
    </source>
</evidence>
<evidence type="ECO:0000303" key="7">
    <source>
    </source>
</evidence>
<evidence type="ECO:0000312" key="8">
    <source>
        <dbReference type="PomBase" id="SPAC890.07c"/>
    </source>
</evidence>
<protein>
    <recommendedName>
        <fullName evidence="7">Protein arginine N-methyltransferase 1</fullName>
        <ecNumber evidence="1">2.1.1.319</ecNumber>
    </recommendedName>
    <alternativeName>
        <fullName evidence="1">Type I protein arginine N-methyltransferase</fullName>
        <shortName evidence="1">Type I PRMT</shortName>
    </alternativeName>
</protein>
<name>ANM1_SCHPO</name>
<reference key="1">
    <citation type="journal article" date="2002" name="Nature">
        <title>The genome sequence of Schizosaccharomyces pombe.</title>
        <authorList>
            <person name="Wood V."/>
            <person name="Gwilliam R."/>
            <person name="Rajandream M.A."/>
            <person name="Lyne M.H."/>
            <person name="Lyne R."/>
            <person name="Stewart A."/>
            <person name="Sgouros J.G."/>
            <person name="Peat N."/>
            <person name="Hayles J."/>
            <person name="Baker S.G."/>
            <person name="Basham D."/>
            <person name="Bowman S."/>
            <person name="Brooks K."/>
            <person name="Brown D."/>
            <person name="Brown S."/>
            <person name="Chillingworth T."/>
            <person name="Churcher C.M."/>
            <person name="Collins M."/>
            <person name="Connor R."/>
            <person name="Cronin A."/>
            <person name="Davis P."/>
            <person name="Feltwell T."/>
            <person name="Fraser A."/>
            <person name="Gentles S."/>
            <person name="Goble A."/>
            <person name="Hamlin N."/>
            <person name="Harris D.E."/>
            <person name="Hidalgo J."/>
            <person name="Hodgson G."/>
            <person name="Holroyd S."/>
            <person name="Hornsby T."/>
            <person name="Howarth S."/>
            <person name="Huckle E.J."/>
            <person name="Hunt S."/>
            <person name="Jagels K."/>
            <person name="James K.D."/>
            <person name="Jones L."/>
            <person name="Jones M."/>
            <person name="Leather S."/>
            <person name="McDonald S."/>
            <person name="McLean J."/>
            <person name="Mooney P."/>
            <person name="Moule S."/>
            <person name="Mungall K.L."/>
            <person name="Murphy L.D."/>
            <person name="Niblett D."/>
            <person name="Odell C."/>
            <person name="Oliver K."/>
            <person name="O'Neil S."/>
            <person name="Pearson D."/>
            <person name="Quail M.A."/>
            <person name="Rabbinowitsch E."/>
            <person name="Rutherford K.M."/>
            <person name="Rutter S."/>
            <person name="Saunders D."/>
            <person name="Seeger K."/>
            <person name="Sharp S."/>
            <person name="Skelton J."/>
            <person name="Simmonds M.N."/>
            <person name="Squares R."/>
            <person name="Squares S."/>
            <person name="Stevens K."/>
            <person name="Taylor K."/>
            <person name="Taylor R.G."/>
            <person name="Tivey A."/>
            <person name="Walsh S.V."/>
            <person name="Warren T."/>
            <person name="Whitehead S."/>
            <person name="Woodward J.R."/>
            <person name="Volckaert G."/>
            <person name="Aert R."/>
            <person name="Robben J."/>
            <person name="Grymonprez B."/>
            <person name="Weltjens I."/>
            <person name="Vanstreels E."/>
            <person name="Rieger M."/>
            <person name="Schaefer M."/>
            <person name="Mueller-Auer S."/>
            <person name="Gabel C."/>
            <person name="Fuchs M."/>
            <person name="Duesterhoeft A."/>
            <person name="Fritzc C."/>
            <person name="Holzer E."/>
            <person name="Moestl D."/>
            <person name="Hilbert H."/>
            <person name="Borzym K."/>
            <person name="Langer I."/>
            <person name="Beck A."/>
            <person name="Lehrach H."/>
            <person name="Reinhardt R."/>
            <person name="Pohl T.M."/>
            <person name="Eger P."/>
            <person name="Zimmermann W."/>
            <person name="Wedler H."/>
            <person name="Wambutt R."/>
            <person name="Purnelle B."/>
            <person name="Goffeau A."/>
            <person name="Cadieu E."/>
            <person name="Dreano S."/>
            <person name="Gloux S."/>
            <person name="Lelaure V."/>
            <person name="Mottier S."/>
            <person name="Galibert F."/>
            <person name="Aves S.J."/>
            <person name="Xiang Z."/>
            <person name="Hunt C."/>
            <person name="Moore K."/>
            <person name="Hurst S.M."/>
            <person name="Lucas M."/>
            <person name="Rochet M."/>
            <person name="Gaillardin C."/>
            <person name="Tallada V.A."/>
            <person name="Garzon A."/>
            <person name="Thode G."/>
            <person name="Daga R.R."/>
            <person name="Cruzado L."/>
            <person name="Jimenez J."/>
            <person name="Sanchez M."/>
            <person name="del Rey F."/>
            <person name="Benito J."/>
            <person name="Dominguez A."/>
            <person name="Revuelta J.L."/>
            <person name="Moreno S."/>
            <person name="Armstrong J."/>
            <person name="Forsburg S.L."/>
            <person name="Cerutti L."/>
            <person name="Lowe T."/>
            <person name="McCombie W.R."/>
            <person name="Paulsen I."/>
            <person name="Potashkin J."/>
            <person name="Shpakovski G.V."/>
            <person name="Ussery D."/>
            <person name="Barrell B.G."/>
            <person name="Nurse P."/>
        </authorList>
    </citation>
    <scope>NUCLEOTIDE SEQUENCE [LARGE SCALE GENOMIC DNA]</scope>
    <source>
        <strain>972 / ATCC 24843</strain>
    </source>
</reference>
<reference key="2">
    <citation type="journal article" date="2004" name="EMBO J.">
        <title>PRMT3 is a ribosomal protein methyltransferase that affects the cellular levels of ribosomal subunits.</title>
        <authorList>
            <person name="Bachand F."/>
            <person name="Silver P.A."/>
        </authorList>
    </citation>
    <scope>SUBCELLULAR LOCATION</scope>
</reference>
<reference key="3">
    <citation type="journal article" date="2007" name="J. Biol. Chem.">
        <title>Regulation of the nuclear poly(A)-binding protein by arginine methylation in fission yeast.</title>
        <authorList>
            <person name="Perreault A."/>
            <person name="Lemieux C."/>
            <person name="Bachand F."/>
        </authorList>
    </citation>
    <scope>FUNCTION</scope>
    <scope>INTERACTION WITH PAB2</scope>
</reference>
<reference key="4">
    <citation type="journal article" date="2008" name="J. Proteome Res.">
        <title>Phosphoproteome analysis of fission yeast.</title>
        <authorList>
            <person name="Wilson-Grady J.T."/>
            <person name="Villen J."/>
            <person name="Gygi S.P."/>
        </authorList>
    </citation>
    <scope>PHOSPHORYLATION [LARGE SCALE ANALYSIS] AT TYR-19 AND SER-176</scope>
    <scope>IDENTIFICATION BY MASS SPECTROMETRY</scope>
</reference>
<sequence>MPGNTKKSADSGLTAKDYYFDSYSHWGIHEEMLKDDVRTLSYRDAIMQNPHLFRDKIVLDVGCGTGILSMFCARAGAKHVYGVDMSEIIHKAVQIVEVNKLSDRITLIQGKMEEIQLPVEKVDIIVSEWMGYFLLYESMLDTVLVARDRYLAPDGLLFPDRAQIQLAAIEDADYKSEKIGFWDDVYGFDFSPIKKDVWKEPLVDTVDRIAVNTNSCVILDLDLKTVKKEDLAFSSPFEITATRNDFVHAFLAWFDIEFSACHKPIKFSTGPFSRYTHWKQTVFYTHKDLTVKAGEYIRGTITCKPAEGNHRELDIDISYTFNPREPNREPVSEDLSYRMC</sequence>
<dbReference type="EC" id="2.1.1.319" evidence="1"/>
<dbReference type="EMBL" id="CU329670">
    <property type="protein sequence ID" value="CAB63498.2"/>
    <property type="molecule type" value="Genomic_DNA"/>
</dbReference>
<dbReference type="PIR" id="T50263">
    <property type="entry name" value="T50263"/>
</dbReference>
<dbReference type="RefSeq" id="NP_594825.2">
    <property type="nucleotide sequence ID" value="NM_001020254.3"/>
</dbReference>
<dbReference type="SMR" id="Q9URX7"/>
<dbReference type="BioGRID" id="279912">
    <property type="interactions" value="9"/>
</dbReference>
<dbReference type="FunCoup" id="Q9URX7">
    <property type="interactions" value="833"/>
</dbReference>
<dbReference type="STRING" id="284812.Q9URX7"/>
<dbReference type="iPTMnet" id="Q9URX7"/>
<dbReference type="PaxDb" id="4896-SPAC890.07c.1"/>
<dbReference type="EnsemblFungi" id="SPAC890.07c.1">
    <property type="protein sequence ID" value="SPAC890.07c.1:pep"/>
    <property type="gene ID" value="SPAC890.07c"/>
</dbReference>
<dbReference type="GeneID" id="2543492"/>
<dbReference type="KEGG" id="spo:2543492"/>
<dbReference type="PomBase" id="SPAC890.07c">
    <property type="gene designation" value="rmt1"/>
</dbReference>
<dbReference type="VEuPathDB" id="FungiDB:SPAC890.07c"/>
<dbReference type="eggNOG" id="KOG1499">
    <property type="taxonomic scope" value="Eukaryota"/>
</dbReference>
<dbReference type="HOGENOM" id="CLU_017375_1_2_1"/>
<dbReference type="InParanoid" id="Q9URX7"/>
<dbReference type="OMA" id="CTHTKVK"/>
<dbReference type="PhylomeDB" id="Q9URX7"/>
<dbReference type="Reactome" id="R-SPO-3214858">
    <property type="pathway name" value="RMTs methylate histone arginines"/>
</dbReference>
<dbReference type="Reactome" id="R-SPO-8876725">
    <property type="pathway name" value="Protein methylation"/>
</dbReference>
<dbReference type="Reactome" id="R-SPO-9018519">
    <property type="pathway name" value="Estrogen-dependent gene expression"/>
</dbReference>
<dbReference type="PRO" id="PR:Q9URX7"/>
<dbReference type="Proteomes" id="UP000002485">
    <property type="component" value="Chromosome I"/>
</dbReference>
<dbReference type="GO" id="GO:0005829">
    <property type="term" value="C:cytosol"/>
    <property type="evidence" value="ECO:0007005"/>
    <property type="project" value="PomBase"/>
</dbReference>
<dbReference type="GO" id="GO:0005634">
    <property type="term" value="C:nucleus"/>
    <property type="evidence" value="ECO:0000314"/>
    <property type="project" value="PomBase"/>
</dbReference>
<dbReference type="GO" id="GO:0042054">
    <property type="term" value="F:histone methyltransferase activity"/>
    <property type="evidence" value="ECO:0000318"/>
    <property type="project" value="GO_Central"/>
</dbReference>
<dbReference type="GO" id="GO:0016274">
    <property type="term" value="F:protein-arginine N-methyltransferase activity"/>
    <property type="evidence" value="ECO:0000318"/>
    <property type="project" value="GO_Central"/>
</dbReference>
<dbReference type="GO" id="GO:0035242">
    <property type="term" value="F:protein-arginine omega-N asymmetric methyltransferase activity"/>
    <property type="evidence" value="ECO:0000315"/>
    <property type="project" value="PomBase"/>
</dbReference>
<dbReference type="GO" id="GO:0035241">
    <property type="term" value="F:protein-arginine omega-N monomethyltransferase activity"/>
    <property type="evidence" value="ECO:0007669"/>
    <property type="project" value="RHEA"/>
</dbReference>
<dbReference type="GO" id="GO:0006338">
    <property type="term" value="P:chromatin remodeling"/>
    <property type="evidence" value="ECO:0000318"/>
    <property type="project" value="GO_Central"/>
</dbReference>
<dbReference type="GO" id="GO:0032259">
    <property type="term" value="P:methylation"/>
    <property type="evidence" value="ECO:0007669"/>
    <property type="project" value="UniProtKB-KW"/>
</dbReference>
<dbReference type="GO" id="GO:0006355">
    <property type="term" value="P:regulation of DNA-templated transcription"/>
    <property type="evidence" value="ECO:0000318"/>
    <property type="project" value="GO_Central"/>
</dbReference>
<dbReference type="CDD" id="cd02440">
    <property type="entry name" value="AdoMet_MTases"/>
    <property type="match status" value="1"/>
</dbReference>
<dbReference type="FunFam" id="2.70.160.11:FF:000001">
    <property type="entry name" value="Blast:Protein arginine N-methyltransferase 1"/>
    <property type="match status" value="1"/>
</dbReference>
<dbReference type="FunFam" id="3.40.50.150:FF:000034">
    <property type="entry name" value="Protein arginine N-methyltransferase 3"/>
    <property type="match status" value="1"/>
</dbReference>
<dbReference type="Gene3D" id="2.70.160.11">
    <property type="entry name" value="Hnrnp arginine n-methyltransferase1"/>
    <property type="match status" value="1"/>
</dbReference>
<dbReference type="Gene3D" id="3.40.50.150">
    <property type="entry name" value="Vaccinia Virus protein VP39"/>
    <property type="match status" value="1"/>
</dbReference>
<dbReference type="InterPro" id="IPR025799">
    <property type="entry name" value="Arg_MeTrfase"/>
</dbReference>
<dbReference type="InterPro" id="IPR041698">
    <property type="entry name" value="Methyltransf_25"/>
</dbReference>
<dbReference type="InterPro" id="IPR055135">
    <property type="entry name" value="PRMT_dom"/>
</dbReference>
<dbReference type="InterPro" id="IPR029063">
    <property type="entry name" value="SAM-dependent_MTases_sf"/>
</dbReference>
<dbReference type="PANTHER" id="PTHR11006">
    <property type="entry name" value="PROTEIN ARGININE N-METHYLTRANSFERASE"/>
    <property type="match status" value="1"/>
</dbReference>
<dbReference type="PANTHER" id="PTHR11006:SF53">
    <property type="entry name" value="PROTEIN ARGININE N-METHYLTRANSFERASE 3"/>
    <property type="match status" value="1"/>
</dbReference>
<dbReference type="Pfam" id="PF13649">
    <property type="entry name" value="Methyltransf_25"/>
    <property type="match status" value="1"/>
</dbReference>
<dbReference type="Pfam" id="PF22528">
    <property type="entry name" value="PRMT_C"/>
    <property type="match status" value="1"/>
</dbReference>
<dbReference type="SUPFAM" id="SSF53335">
    <property type="entry name" value="S-adenosyl-L-methionine-dependent methyltransferases"/>
    <property type="match status" value="1"/>
</dbReference>
<dbReference type="PROSITE" id="PS51678">
    <property type="entry name" value="SAM_MT_PRMT"/>
    <property type="match status" value="1"/>
</dbReference>
<proteinExistence type="evidence at protein level"/>